<name>MURB_SHEB9</name>
<proteinExistence type="inferred from homology"/>
<dbReference type="EC" id="1.3.1.98" evidence="1"/>
<dbReference type="EMBL" id="CP000891">
    <property type="protein sequence ID" value="ABX47365.1"/>
    <property type="status" value="ALT_INIT"/>
    <property type="molecule type" value="Genomic_DNA"/>
</dbReference>
<dbReference type="RefSeq" id="WP_037391626.1">
    <property type="nucleotide sequence ID" value="NC_009997.1"/>
</dbReference>
<dbReference type="SMR" id="A9KW85"/>
<dbReference type="GeneID" id="11770542"/>
<dbReference type="KEGG" id="sbn:Sbal195_0183"/>
<dbReference type="HOGENOM" id="CLU_035304_0_0_6"/>
<dbReference type="UniPathway" id="UPA00219"/>
<dbReference type="Proteomes" id="UP000000770">
    <property type="component" value="Chromosome"/>
</dbReference>
<dbReference type="GO" id="GO:0005829">
    <property type="term" value="C:cytosol"/>
    <property type="evidence" value="ECO:0007669"/>
    <property type="project" value="TreeGrafter"/>
</dbReference>
<dbReference type="GO" id="GO:0071949">
    <property type="term" value="F:FAD binding"/>
    <property type="evidence" value="ECO:0007669"/>
    <property type="project" value="InterPro"/>
</dbReference>
<dbReference type="GO" id="GO:0008762">
    <property type="term" value="F:UDP-N-acetylmuramate dehydrogenase activity"/>
    <property type="evidence" value="ECO:0007669"/>
    <property type="project" value="UniProtKB-UniRule"/>
</dbReference>
<dbReference type="GO" id="GO:0051301">
    <property type="term" value="P:cell division"/>
    <property type="evidence" value="ECO:0007669"/>
    <property type="project" value="UniProtKB-KW"/>
</dbReference>
<dbReference type="GO" id="GO:0071555">
    <property type="term" value="P:cell wall organization"/>
    <property type="evidence" value="ECO:0007669"/>
    <property type="project" value="UniProtKB-KW"/>
</dbReference>
<dbReference type="GO" id="GO:0009252">
    <property type="term" value="P:peptidoglycan biosynthetic process"/>
    <property type="evidence" value="ECO:0007669"/>
    <property type="project" value="UniProtKB-UniRule"/>
</dbReference>
<dbReference type="GO" id="GO:0008360">
    <property type="term" value="P:regulation of cell shape"/>
    <property type="evidence" value="ECO:0007669"/>
    <property type="project" value="UniProtKB-KW"/>
</dbReference>
<dbReference type="Gene3D" id="3.30.465.10">
    <property type="match status" value="1"/>
</dbReference>
<dbReference type="Gene3D" id="3.90.78.10">
    <property type="entry name" value="UDP-N-acetylenolpyruvoylglucosamine reductase, C-terminal domain"/>
    <property type="match status" value="1"/>
</dbReference>
<dbReference type="Gene3D" id="3.30.43.10">
    <property type="entry name" value="Uridine Diphospho-n-acetylenolpyruvylglucosamine Reductase, domain 2"/>
    <property type="match status" value="1"/>
</dbReference>
<dbReference type="HAMAP" id="MF_00037">
    <property type="entry name" value="MurB"/>
    <property type="match status" value="1"/>
</dbReference>
<dbReference type="InterPro" id="IPR016166">
    <property type="entry name" value="FAD-bd_PCMH"/>
</dbReference>
<dbReference type="InterPro" id="IPR036318">
    <property type="entry name" value="FAD-bd_PCMH-like_sf"/>
</dbReference>
<dbReference type="InterPro" id="IPR016167">
    <property type="entry name" value="FAD-bd_PCMH_sub1"/>
</dbReference>
<dbReference type="InterPro" id="IPR016169">
    <property type="entry name" value="FAD-bd_PCMH_sub2"/>
</dbReference>
<dbReference type="InterPro" id="IPR003170">
    <property type="entry name" value="MurB"/>
</dbReference>
<dbReference type="InterPro" id="IPR011601">
    <property type="entry name" value="MurB_C"/>
</dbReference>
<dbReference type="InterPro" id="IPR036635">
    <property type="entry name" value="MurB_C_sf"/>
</dbReference>
<dbReference type="InterPro" id="IPR006094">
    <property type="entry name" value="Oxid_FAD_bind_N"/>
</dbReference>
<dbReference type="NCBIfam" id="TIGR00179">
    <property type="entry name" value="murB"/>
    <property type="match status" value="1"/>
</dbReference>
<dbReference type="NCBIfam" id="NF000755">
    <property type="entry name" value="PRK00046.1"/>
    <property type="match status" value="1"/>
</dbReference>
<dbReference type="NCBIfam" id="NF010478">
    <property type="entry name" value="PRK13903.1"/>
    <property type="match status" value="1"/>
</dbReference>
<dbReference type="PANTHER" id="PTHR21071">
    <property type="entry name" value="UDP-N-ACETYLENOLPYRUVOYLGLUCOSAMINE REDUCTASE"/>
    <property type="match status" value="1"/>
</dbReference>
<dbReference type="PANTHER" id="PTHR21071:SF4">
    <property type="entry name" value="UDP-N-ACETYLENOLPYRUVOYLGLUCOSAMINE REDUCTASE"/>
    <property type="match status" value="1"/>
</dbReference>
<dbReference type="Pfam" id="PF01565">
    <property type="entry name" value="FAD_binding_4"/>
    <property type="match status" value="1"/>
</dbReference>
<dbReference type="Pfam" id="PF02873">
    <property type="entry name" value="MurB_C"/>
    <property type="match status" value="1"/>
</dbReference>
<dbReference type="SUPFAM" id="SSF56176">
    <property type="entry name" value="FAD-binding/transporter-associated domain-like"/>
    <property type="match status" value="1"/>
</dbReference>
<dbReference type="SUPFAM" id="SSF56194">
    <property type="entry name" value="Uridine diphospho-N-Acetylenolpyruvylglucosamine reductase, MurB, C-terminal domain"/>
    <property type="match status" value="1"/>
</dbReference>
<dbReference type="PROSITE" id="PS51387">
    <property type="entry name" value="FAD_PCMH"/>
    <property type="match status" value="1"/>
</dbReference>
<protein>
    <recommendedName>
        <fullName evidence="1">UDP-N-acetylenolpyruvoylglucosamine reductase</fullName>
        <ecNumber evidence="1">1.3.1.98</ecNumber>
    </recommendedName>
    <alternativeName>
        <fullName evidence="1">UDP-N-acetylmuramate dehydrogenase</fullName>
    </alternativeName>
</protein>
<keyword id="KW-0131">Cell cycle</keyword>
<keyword id="KW-0132">Cell division</keyword>
<keyword id="KW-0133">Cell shape</keyword>
<keyword id="KW-0961">Cell wall biogenesis/degradation</keyword>
<keyword id="KW-0963">Cytoplasm</keyword>
<keyword id="KW-0274">FAD</keyword>
<keyword id="KW-0285">Flavoprotein</keyword>
<keyword id="KW-0521">NADP</keyword>
<keyword id="KW-0560">Oxidoreductase</keyword>
<keyword id="KW-0573">Peptidoglycan synthesis</keyword>
<organism>
    <name type="scientific">Shewanella baltica (strain OS195)</name>
    <dbReference type="NCBI Taxonomy" id="399599"/>
    <lineage>
        <taxon>Bacteria</taxon>
        <taxon>Pseudomonadati</taxon>
        <taxon>Pseudomonadota</taxon>
        <taxon>Gammaproteobacteria</taxon>
        <taxon>Alteromonadales</taxon>
        <taxon>Shewanellaceae</taxon>
        <taxon>Shewanella</taxon>
    </lineage>
</organism>
<reference key="1">
    <citation type="submission" date="2007-11" db="EMBL/GenBank/DDBJ databases">
        <title>Complete sequence of chromosome of Shewanella baltica OS195.</title>
        <authorList>
            <consortium name="US DOE Joint Genome Institute"/>
            <person name="Copeland A."/>
            <person name="Lucas S."/>
            <person name="Lapidus A."/>
            <person name="Barry K."/>
            <person name="Glavina del Rio T."/>
            <person name="Dalin E."/>
            <person name="Tice H."/>
            <person name="Pitluck S."/>
            <person name="Chain P."/>
            <person name="Malfatti S."/>
            <person name="Shin M."/>
            <person name="Vergez L."/>
            <person name="Schmutz J."/>
            <person name="Larimer F."/>
            <person name="Land M."/>
            <person name="Hauser L."/>
            <person name="Kyrpides N."/>
            <person name="Kim E."/>
            <person name="Brettar I."/>
            <person name="Rodrigues J."/>
            <person name="Konstantinidis K."/>
            <person name="Klappenbach J."/>
            <person name="Hofle M."/>
            <person name="Tiedje J."/>
            <person name="Richardson P."/>
        </authorList>
    </citation>
    <scope>NUCLEOTIDE SEQUENCE [LARGE SCALE GENOMIC DNA]</scope>
    <source>
        <strain>OS195</strain>
    </source>
</reference>
<evidence type="ECO:0000255" key="1">
    <source>
        <dbReference type="HAMAP-Rule" id="MF_00037"/>
    </source>
</evidence>
<evidence type="ECO:0000305" key="2"/>
<sequence>MSLAHSLKSFNSFGLAQSCADLVEAHSKEAVQAMCLPLWQQQLPMLVLGGGSNLVFTEDFNGTVVRVLSKGIKVSEDAEAFYLEVEAGENWHELIQFTLEHGMFGLENMALIPGTVGAAPIQNIGAYGVELCDVCDWVEYLDLPSGEFVRISTAECQFAYRESIFKDKLRNLAVVTAVGLRLVKRWQPRLAYGPLQSFDPATVTAREIFERVCQVRSEKLPDPAVLGNAGSFFKNPIVSAACYLDLAQRFPTIVGYAQADATVKLAAGWLIEQAGLKGFVLGNAAVHDKQALVLVNRGGATGRDICRLALHVIAQVQDKFGVVLEAEPRIMGANGEGDLYV</sequence>
<feature type="chain" id="PRO_0000332501" description="UDP-N-acetylenolpyruvoylglucosamine reductase">
    <location>
        <begin position="1"/>
        <end position="341"/>
    </location>
</feature>
<feature type="domain" description="FAD-binding PCMH-type" evidence="1">
    <location>
        <begin position="15"/>
        <end position="185"/>
    </location>
</feature>
<feature type="active site" evidence="1">
    <location>
        <position position="161"/>
    </location>
</feature>
<feature type="active site" description="Proton donor" evidence="1">
    <location>
        <position position="231"/>
    </location>
</feature>
<feature type="active site" evidence="1">
    <location>
        <position position="327"/>
    </location>
</feature>
<comment type="function">
    <text evidence="1">Cell wall formation.</text>
</comment>
<comment type="catalytic activity">
    <reaction evidence="1">
        <text>UDP-N-acetyl-alpha-D-muramate + NADP(+) = UDP-N-acetyl-3-O-(1-carboxyvinyl)-alpha-D-glucosamine + NADPH + H(+)</text>
        <dbReference type="Rhea" id="RHEA:12248"/>
        <dbReference type="ChEBI" id="CHEBI:15378"/>
        <dbReference type="ChEBI" id="CHEBI:57783"/>
        <dbReference type="ChEBI" id="CHEBI:58349"/>
        <dbReference type="ChEBI" id="CHEBI:68483"/>
        <dbReference type="ChEBI" id="CHEBI:70757"/>
        <dbReference type="EC" id="1.3.1.98"/>
    </reaction>
</comment>
<comment type="cofactor">
    <cofactor evidence="1">
        <name>FAD</name>
        <dbReference type="ChEBI" id="CHEBI:57692"/>
    </cofactor>
</comment>
<comment type="pathway">
    <text evidence="1">Cell wall biogenesis; peptidoglycan biosynthesis.</text>
</comment>
<comment type="subcellular location">
    <subcellularLocation>
        <location evidence="1">Cytoplasm</location>
    </subcellularLocation>
</comment>
<comment type="similarity">
    <text evidence="1">Belongs to the MurB family.</text>
</comment>
<comment type="sequence caution" evidence="2">
    <conflict type="erroneous initiation">
        <sequence resource="EMBL-CDS" id="ABX47365"/>
    </conflict>
</comment>
<gene>
    <name evidence="1" type="primary">murB</name>
    <name type="ordered locus">Sbal195_0183</name>
</gene>
<accession>A9KW85</accession>